<sequence>MPIRILPSDLSSQISAGEIIERPASVVKEIIENSIDAGSKNINIIVENSGFQSIILKDDGCGIDKKDLLLAVCHHATSKINSLSDLDKLTTFGFRGEALASIRAVSRLTLISCTRFNDVAAKIYLEGFCSKNIILQPIAHPEGTTIIVDNLFYNIPVRLKFLKNKKLEFSKICEVVKKIALSHFYINFSLKHNNKLITQYNSINNRKNKINRLKDIFDTLDTSEFLEIKEKKYRMVLFGWISHPYNFKKIKNIQYCYVNNRYLYNNIFVNAVRAAYSKIEQKKNISFVLYLTIESFNIDINIHPTKNEIKFHNPDVVYTFIYEAVFSYLKKIKEKYYFNFSCKKQTQLNKEKEFYFYDSDPTFLTLISSIFLKKKQICKNIKNKIKHNNFISKSTPLEKYESSIGRLLIIIHKYYGLIYHDNNFLLLSFPVAKGIVRKQKLKNNIQKENIIEYFLSNIKINLTSQEYLILFNKKEILSKFGFHLIFKKKYVILSSIPAFLKKCNFHIIISNFFAFLFLKKQVFISDIVDWFYINVFIELKNWTYIRGIEVLLEIEYYCPLLLINPPSKLLQKININAALCILKI</sequence>
<organism>
    <name type="scientific">Buchnera aphidicola subsp. Acyrthosiphon pisum (strain APS)</name>
    <name type="common">Acyrthosiphon pisum symbiotic bacterium</name>
    <dbReference type="NCBI Taxonomy" id="107806"/>
    <lineage>
        <taxon>Bacteria</taxon>
        <taxon>Pseudomonadati</taxon>
        <taxon>Pseudomonadota</taxon>
        <taxon>Gammaproteobacteria</taxon>
        <taxon>Enterobacterales</taxon>
        <taxon>Erwiniaceae</taxon>
        <taxon>Buchnera</taxon>
    </lineage>
</organism>
<dbReference type="EMBL" id="BA000003">
    <property type="protein sequence ID" value="BAB13260.1"/>
    <property type="molecule type" value="Genomic_DNA"/>
</dbReference>
<dbReference type="RefSeq" id="NP_240374.1">
    <property type="nucleotide sequence ID" value="NC_002528.1"/>
</dbReference>
<dbReference type="RefSeq" id="WP_010896167.1">
    <property type="nucleotide sequence ID" value="NC_002528.1"/>
</dbReference>
<dbReference type="SMR" id="P57633"/>
<dbReference type="STRING" id="563178.BUAP5A_563"/>
<dbReference type="EnsemblBacteria" id="BAB13260">
    <property type="protein sequence ID" value="BAB13260"/>
    <property type="gene ID" value="BAB13260"/>
</dbReference>
<dbReference type="KEGG" id="buc:BU570"/>
<dbReference type="PATRIC" id="fig|107806.10.peg.573"/>
<dbReference type="eggNOG" id="COG0323">
    <property type="taxonomic scope" value="Bacteria"/>
</dbReference>
<dbReference type="HOGENOM" id="CLU_004131_5_1_6"/>
<dbReference type="Proteomes" id="UP000001806">
    <property type="component" value="Chromosome"/>
</dbReference>
<dbReference type="GO" id="GO:0032300">
    <property type="term" value="C:mismatch repair complex"/>
    <property type="evidence" value="ECO:0007669"/>
    <property type="project" value="InterPro"/>
</dbReference>
<dbReference type="GO" id="GO:0005524">
    <property type="term" value="F:ATP binding"/>
    <property type="evidence" value="ECO:0007669"/>
    <property type="project" value="InterPro"/>
</dbReference>
<dbReference type="GO" id="GO:0016887">
    <property type="term" value="F:ATP hydrolysis activity"/>
    <property type="evidence" value="ECO:0007669"/>
    <property type="project" value="InterPro"/>
</dbReference>
<dbReference type="GO" id="GO:0140664">
    <property type="term" value="F:ATP-dependent DNA damage sensor activity"/>
    <property type="evidence" value="ECO:0007669"/>
    <property type="project" value="InterPro"/>
</dbReference>
<dbReference type="GO" id="GO:0030983">
    <property type="term" value="F:mismatched DNA binding"/>
    <property type="evidence" value="ECO:0007669"/>
    <property type="project" value="InterPro"/>
</dbReference>
<dbReference type="GO" id="GO:0006298">
    <property type="term" value="P:mismatch repair"/>
    <property type="evidence" value="ECO:0007669"/>
    <property type="project" value="UniProtKB-UniRule"/>
</dbReference>
<dbReference type="CDD" id="cd16926">
    <property type="entry name" value="HATPase_MutL-MLH-PMS-like"/>
    <property type="match status" value="1"/>
</dbReference>
<dbReference type="CDD" id="cd03482">
    <property type="entry name" value="MutL_Trans_MutL"/>
    <property type="match status" value="1"/>
</dbReference>
<dbReference type="FunFam" id="3.30.565.10:FF:000003">
    <property type="entry name" value="DNA mismatch repair endonuclease MutL"/>
    <property type="match status" value="1"/>
</dbReference>
<dbReference type="Gene3D" id="3.30.230.10">
    <property type="match status" value="1"/>
</dbReference>
<dbReference type="Gene3D" id="3.30.565.10">
    <property type="entry name" value="Histidine kinase-like ATPase, C-terminal domain"/>
    <property type="match status" value="1"/>
</dbReference>
<dbReference type="Gene3D" id="3.30.1540.20">
    <property type="entry name" value="MutL, C-terminal domain, dimerisation subdomain"/>
    <property type="match status" value="1"/>
</dbReference>
<dbReference type="Gene3D" id="3.30.1370.100">
    <property type="entry name" value="MutL, C-terminal domain, regulatory subdomain"/>
    <property type="match status" value="1"/>
</dbReference>
<dbReference type="HAMAP" id="MF_00149">
    <property type="entry name" value="DNA_mis_repair"/>
    <property type="match status" value="1"/>
</dbReference>
<dbReference type="InterPro" id="IPR014762">
    <property type="entry name" value="DNA_mismatch_repair_CS"/>
</dbReference>
<dbReference type="InterPro" id="IPR020667">
    <property type="entry name" value="DNA_mismatch_repair_MutL"/>
</dbReference>
<dbReference type="InterPro" id="IPR013507">
    <property type="entry name" value="DNA_mismatch_S5_2-like"/>
</dbReference>
<dbReference type="InterPro" id="IPR036890">
    <property type="entry name" value="HATPase_C_sf"/>
</dbReference>
<dbReference type="InterPro" id="IPR002099">
    <property type="entry name" value="MutL/Mlh/PMS"/>
</dbReference>
<dbReference type="InterPro" id="IPR038973">
    <property type="entry name" value="MutL/Mlh/Pms-like"/>
</dbReference>
<dbReference type="InterPro" id="IPR014790">
    <property type="entry name" value="MutL_C"/>
</dbReference>
<dbReference type="InterPro" id="IPR042120">
    <property type="entry name" value="MutL_C_dimsub"/>
</dbReference>
<dbReference type="InterPro" id="IPR042121">
    <property type="entry name" value="MutL_C_regsub"/>
</dbReference>
<dbReference type="InterPro" id="IPR037198">
    <property type="entry name" value="MutL_C_sf"/>
</dbReference>
<dbReference type="InterPro" id="IPR020568">
    <property type="entry name" value="Ribosomal_Su5_D2-typ_SF"/>
</dbReference>
<dbReference type="InterPro" id="IPR014721">
    <property type="entry name" value="Ribsml_uS5_D2-typ_fold_subgr"/>
</dbReference>
<dbReference type="NCBIfam" id="TIGR00585">
    <property type="entry name" value="mutl"/>
    <property type="match status" value="1"/>
</dbReference>
<dbReference type="PANTHER" id="PTHR10073">
    <property type="entry name" value="DNA MISMATCH REPAIR PROTEIN MLH, PMS, MUTL"/>
    <property type="match status" value="1"/>
</dbReference>
<dbReference type="PANTHER" id="PTHR10073:SF12">
    <property type="entry name" value="DNA MISMATCH REPAIR PROTEIN MLH1"/>
    <property type="match status" value="1"/>
</dbReference>
<dbReference type="Pfam" id="PF01119">
    <property type="entry name" value="DNA_mis_repair"/>
    <property type="match status" value="1"/>
</dbReference>
<dbReference type="Pfam" id="PF13589">
    <property type="entry name" value="HATPase_c_3"/>
    <property type="match status" value="1"/>
</dbReference>
<dbReference type="Pfam" id="PF08676">
    <property type="entry name" value="MutL_C"/>
    <property type="match status" value="1"/>
</dbReference>
<dbReference type="SMART" id="SM01340">
    <property type="entry name" value="DNA_mis_repair"/>
    <property type="match status" value="1"/>
</dbReference>
<dbReference type="SUPFAM" id="SSF55874">
    <property type="entry name" value="ATPase domain of HSP90 chaperone/DNA topoisomerase II/histidine kinase"/>
    <property type="match status" value="1"/>
</dbReference>
<dbReference type="SUPFAM" id="SSF118116">
    <property type="entry name" value="DNA mismatch repair protein MutL"/>
    <property type="match status" value="1"/>
</dbReference>
<dbReference type="SUPFAM" id="SSF54211">
    <property type="entry name" value="Ribosomal protein S5 domain 2-like"/>
    <property type="match status" value="1"/>
</dbReference>
<dbReference type="PROSITE" id="PS00058">
    <property type="entry name" value="DNA_MISMATCH_REPAIR_1"/>
    <property type="match status" value="1"/>
</dbReference>
<evidence type="ECO:0000250" key="1"/>
<evidence type="ECO:0000305" key="2"/>
<gene>
    <name type="primary">mutL</name>
    <name type="ordered locus">BU570</name>
</gene>
<keyword id="KW-0227">DNA damage</keyword>
<keyword id="KW-0234">DNA repair</keyword>
<keyword id="KW-1185">Reference proteome</keyword>
<reference key="1">
    <citation type="journal article" date="2000" name="Nature">
        <title>Genome sequence of the endocellular bacterial symbiont of aphids Buchnera sp. APS.</title>
        <authorList>
            <person name="Shigenobu S."/>
            <person name="Watanabe H."/>
            <person name="Hattori M."/>
            <person name="Sakaki Y."/>
            <person name="Ishikawa H."/>
        </authorList>
    </citation>
    <scope>NUCLEOTIDE SEQUENCE [LARGE SCALE GENOMIC DNA]</scope>
    <source>
        <strain>APS</strain>
    </source>
</reference>
<feature type="chain" id="PRO_0000177931" description="DNA mismatch repair protein MutL">
    <location>
        <begin position="1"/>
        <end position="584"/>
    </location>
</feature>
<proteinExistence type="inferred from homology"/>
<name>MUTL_BUCAI</name>
<protein>
    <recommendedName>
        <fullName>DNA mismatch repair protein MutL</fullName>
    </recommendedName>
</protein>
<accession>P57633</accession>
<comment type="function">
    <text evidence="1">This protein is involved in the repair of mismatches in DNA. It is required for dam-dependent methyl-directed DNA mismatch repair. May act as a 'molecular matchmaker', a protein that promotes the formation of a stable complex between two or more DNA-binding proteins in an ATP-dependent manner without itself being part of a final effector complex (By similarity).</text>
</comment>
<comment type="similarity">
    <text evidence="2">Belongs to the DNA mismatch repair MutL/HexB family.</text>
</comment>